<evidence type="ECO:0000255" key="1">
    <source>
        <dbReference type="HAMAP-Rule" id="MF_00255"/>
    </source>
</evidence>
<dbReference type="EC" id="6.1.1.14" evidence="1"/>
<dbReference type="EMBL" id="CU928160">
    <property type="protein sequence ID" value="CAR00520.1"/>
    <property type="molecule type" value="Genomic_DNA"/>
</dbReference>
<dbReference type="RefSeq" id="WP_001291758.1">
    <property type="nucleotide sequence ID" value="NC_011741.1"/>
</dbReference>
<dbReference type="SMR" id="B7M3I1"/>
<dbReference type="KEGG" id="ecr:ECIAI1_3723"/>
<dbReference type="HOGENOM" id="CLU_007220_2_2_6"/>
<dbReference type="GO" id="GO:0005829">
    <property type="term" value="C:cytosol"/>
    <property type="evidence" value="ECO:0007669"/>
    <property type="project" value="TreeGrafter"/>
</dbReference>
<dbReference type="GO" id="GO:0004814">
    <property type="term" value="F:arginine-tRNA ligase activity"/>
    <property type="evidence" value="ECO:0007669"/>
    <property type="project" value="InterPro"/>
</dbReference>
<dbReference type="GO" id="GO:0005524">
    <property type="term" value="F:ATP binding"/>
    <property type="evidence" value="ECO:0007669"/>
    <property type="project" value="UniProtKB-UniRule"/>
</dbReference>
<dbReference type="GO" id="GO:0004820">
    <property type="term" value="F:glycine-tRNA ligase activity"/>
    <property type="evidence" value="ECO:0007669"/>
    <property type="project" value="UniProtKB-UniRule"/>
</dbReference>
<dbReference type="GO" id="GO:0006420">
    <property type="term" value="P:arginyl-tRNA aminoacylation"/>
    <property type="evidence" value="ECO:0007669"/>
    <property type="project" value="InterPro"/>
</dbReference>
<dbReference type="GO" id="GO:0006426">
    <property type="term" value="P:glycyl-tRNA aminoacylation"/>
    <property type="evidence" value="ECO:0007669"/>
    <property type="project" value="UniProtKB-UniRule"/>
</dbReference>
<dbReference type="HAMAP" id="MF_00255">
    <property type="entry name" value="Gly_tRNA_synth_beta"/>
    <property type="match status" value="1"/>
</dbReference>
<dbReference type="InterPro" id="IPR008909">
    <property type="entry name" value="DALR_anticod-bd"/>
</dbReference>
<dbReference type="InterPro" id="IPR015944">
    <property type="entry name" value="Gly-tRNA-synth_bsu"/>
</dbReference>
<dbReference type="InterPro" id="IPR006194">
    <property type="entry name" value="Gly-tRNA-synth_heterodimer"/>
</dbReference>
<dbReference type="NCBIfam" id="TIGR00211">
    <property type="entry name" value="glyS"/>
    <property type="match status" value="1"/>
</dbReference>
<dbReference type="PANTHER" id="PTHR30075:SF2">
    <property type="entry name" value="GLYCINE--TRNA LIGASE, CHLOROPLASTIC_MITOCHONDRIAL 2"/>
    <property type="match status" value="1"/>
</dbReference>
<dbReference type="PANTHER" id="PTHR30075">
    <property type="entry name" value="GLYCYL-TRNA SYNTHETASE"/>
    <property type="match status" value="1"/>
</dbReference>
<dbReference type="Pfam" id="PF05746">
    <property type="entry name" value="DALR_1"/>
    <property type="match status" value="1"/>
</dbReference>
<dbReference type="Pfam" id="PF02092">
    <property type="entry name" value="tRNA_synt_2f"/>
    <property type="match status" value="1"/>
</dbReference>
<dbReference type="PRINTS" id="PR01045">
    <property type="entry name" value="TRNASYNTHGB"/>
</dbReference>
<dbReference type="SUPFAM" id="SSF109604">
    <property type="entry name" value="HD-domain/PDEase-like"/>
    <property type="match status" value="1"/>
</dbReference>
<dbReference type="PROSITE" id="PS50861">
    <property type="entry name" value="AA_TRNA_LIGASE_II_GLYAB"/>
    <property type="match status" value="1"/>
</dbReference>
<gene>
    <name evidence="1" type="primary">glyS</name>
    <name type="ordered locus">ECIAI1_3723</name>
</gene>
<feature type="chain" id="PRO_1000197197" description="Glycine--tRNA ligase beta subunit">
    <location>
        <begin position="1"/>
        <end position="689"/>
    </location>
</feature>
<accession>B7M3I1</accession>
<reference key="1">
    <citation type="journal article" date="2009" name="PLoS Genet.">
        <title>Organised genome dynamics in the Escherichia coli species results in highly diverse adaptive paths.</title>
        <authorList>
            <person name="Touchon M."/>
            <person name="Hoede C."/>
            <person name="Tenaillon O."/>
            <person name="Barbe V."/>
            <person name="Baeriswyl S."/>
            <person name="Bidet P."/>
            <person name="Bingen E."/>
            <person name="Bonacorsi S."/>
            <person name="Bouchier C."/>
            <person name="Bouvet O."/>
            <person name="Calteau A."/>
            <person name="Chiapello H."/>
            <person name="Clermont O."/>
            <person name="Cruveiller S."/>
            <person name="Danchin A."/>
            <person name="Diard M."/>
            <person name="Dossat C."/>
            <person name="Karoui M.E."/>
            <person name="Frapy E."/>
            <person name="Garry L."/>
            <person name="Ghigo J.M."/>
            <person name="Gilles A.M."/>
            <person name="Johnson J."/>
            <person name="Le Bouguenec C."/>
            <person name="Lescat M."/>
            <person name="Mangenot S."/>
            <person name="Martinez-Jehanne V."/>
            <person name="Matic I."/>
            <person name="Nassif X."/>
            <person name="Oztas S."/>
            <person name="Petit M.A."/>
            <person name="Pichon C."/>
            <person name="Rouy Z."/>
            <person name="Ruf C.S."/>
            <person name="Schneider D."/>
            <person name="Tourret J."/>
            <person name="Vacherie B."/>
            <person name="Vallenet D."/>
            <person name="Medigue C."/>
            <person name="Rocha E.P.C."/>
            <person name="Denamur E."/>
        </authorList>
    </citation>
    <scope>NUCLEOTIDE SEQUENCE [LARGE SCALE GENOMIC DNA]</scope>
    <source>
        <strain>IAI1</strain>
    </source>
</reference>
<protein>
    <recommendedName>
        <fullName evidence="1">Glycine--tRNA ligase beta subunit</fullName>
        <ecNumber evidence="1">6.1.1.14</ecNumber>
    </recommendedName>
    <alternativeName>
        <fullName evidence="1">Glycyl-tRNA synthetase beta subunit</fullName>
        <shortName evidence="1">GlyRS</shortName>
    </alternativeName>
</protein>
<name>SYGB_ECO8A</name>
<keyword id="KW-0030">Aminoacyl-tRNA synthetase</keyword>
<keyword id="KW-0067">ATP-binding</keyword>
<keyword id="KW-0963">Cytoplasm</keyword>
<keyword id="KW-0436">Ligase</keyword>
<keyword id="KW-0547">Nucleotide-binding</keyword>
<keyword id="KW-0648">Protein biosynthesis</keyword>
<comment type="catalytic activity">
    <reaction evidence="1">
        <text>tRNA(Gly) + glycine + ATP = glycyl-tRNA(Gly) + AMP + diphosphate</text>
        <dbReference type="Rhea" id="RHEA:16013"/>
        <dbReference type="Rhea" id="RHEA-COMP:9664"/>
        <dbReference type="Rhea" id="RHEA-COMP:9683"/>
        <dbReference type="ChEBI" id="CHEBI:30616"/>
        <dbReference type="ChEBI" id="CHEBI:33019"/>
        <dbReference type="ChEBI" id="CHEBI:57305"/>
        <dbReference type="ChEBI" id="CHEBI:78442"/>
        <dbReference type="ChEBI" id="CHEBI:78522"/>
        <dbReference type="ChEBI" id="CHEBI:456215"/>
        <dbReference type="EC" id="6.1.1.14"/>
    </reaction>
</comment>
<comment type="subunit">
    <text evidence="1">Tetramer of two alpha and two beta subunits.</text>
</comment>
<comment type="subcellular location">
    <subcellularLocation>
        <location evidence="1">Cytoplasm</location>
    </subcellularLocation>
</comment>
<comment type="similarity">
    <text evidence="1">Belongs to the class-II aminoacyl-tRNA synthetase family.</text>
</comment>
<organism>
    <name type="scientific">Escherichia coli O8 (strain IAI1)</name>
    <dbReference type="NCBI Taxonomy" id="585034"/>
    <lineage>
        <taxon>Bacteria</taxon>
        <taxon>Pseudomonadati</taxon>
        <taxon>Pseudomonadota</taxon>
        <taxon>Gammaproteobacteria</taxon>
        <taxon>Enterobacterales</taxon>
        <taxon>Enterobacteriaceae</taxon>
        <taxon>Escherichia</taxon>
    </lineage>
</organism>
<sequence>MSEKTFLVEIGTEELPPKALRSLAESFAANFTAELDNAGLAHGTVQWFAAPRRLALKVANLAEAQPDREIEKRGPAIAQAFDAEGKPSKAAEGWARGCGITVDQAERLTSDKGEWLLYRAHVKGESTEALLPNMVATSLAKLPIPKLMRWGASDVHFVRPVHTVTLLLGDKVIPATILGIQSDRVIRGHRFMGEPEFTIDNADQYPEILRERGKVIADYEERKAKIKADAEEAARKIGGNADLSESLLEEVASLVEWPVVLTAKFEEKFLAVPSEALVYTMKGDQKYFPVYANDGKLLPNFIFVANIESKDPQQIISGNEKVVRPRLADAEFFFNTDRKKRLEDNLPRLQTVLFQQQLGTLRDKTDRIQALAGWIAEQIGADVNHATRAGLLSKCDLMTNMVFEFTDTQGVMGMHYARHDGEAEDVAVALNEQYQPRFAGDDLPSNPVACALAIADKMDTLAGIFGIGQHPKGDKDPFALRRAALGVLRIIVEKNLNLDLQTLTEEAVRLYGDKLTNANVVDDVIDFMLGRFRAWYQDEGYTVDTIQAVLARRPTRPADFDARMKAVSHFRTLDAAAALAAANKRVSNILAKSDEVLSDRVNASTLKEPEEIKLAMQVVVLRDKLEPYFAEGRYQDALVELAELREPVDAFFDKVMVMVDDKELRLNRLTMLEKLRELFLRVADISLLQ</sequence>
<proteinExistence type="inferred from homology"/>